<evidence type="ECO:0000255" key="1"/>
<evidence type="ECO:0000269" key="2">
    <source>
    </source>
</evidence>
<evidence type="ECO:0000269" key="3">
    <source>
    </source>
</evidence>
<evidence type="ECO:0000269" key="4">
    <source>
    </source>
</evidence>
<evidence type="ECO:0000269" key="5">
    <source>
    </source>
</evidence>
<evidence type="ECO:0000269" key="6">
    <source>
    </source>
</evidence>
<evidence type="ECO:0000269" key="7">
    <source>
    </source>
</evidence>
<evidence type="ECO:0000269" key="8">
    <source>
    </source>
</evidence>
<evidence type="ECO:0000269" key="9">
    <source>
    </source>
</evidence>
<evidence type="ECO:0000269" key="10">
    <source>
    </source>
</evidence>
<evidence type="ECO:0000269" key="11">
    <source>
    </source>
</evidence>
<evidence type="ECO:0000269" key="12">
    <source>
    </source>
</evidence>
<evidence type="ECO:0000269" key="13">
    <source>
    </source>
</evidence>
<evidence type="ECO:0000269" key="14">
    <source>
    </source>
</evidence>
<evidence type="ECO:0000269" key="15">
    <source>
    </source>
</evidence>
<evidence type="ECO:0000269" key="16">
    <source>
    </source>
</evidence>
<evidence type="ECO:0000269" key="17">
    <source>
    </source>
</evidence>
<evidence type="ECO:0000269" key="18">
    <source>
    </source>
</evidence>
<evidence type="ECO:0000269" key="19">
    <source>
    </source>
</evidence>
<evidence type="ECO:0000269" key="20">
    <source>
    </source>
</evidence>
<evidence type="ECO:0000269" key="21">
    <source>
    </source>
</evidence>
<evidence type="ECO:0000269" key="22">
    <source ref="4"/>
</evidence>
<evidence type="ECO:0000269" key="23">
    <source ref="6"/>
</evidence>
<evidence type="ECO:0000305" key="24"/>
<evidence type="ECO:0000305" key="25">
    <source>
    </source>
</evidence>
<evidence type="ECO:0007829" key="26">
    <source>
        <dbReference type="PDB" id="7BW1"/>
    </source>
</evidence>
<dbReference type="EC" id="1.3.1.22" evidence="4"/>
<dbReference type="EMBL" id="M74047">
    <property type="protein sequence ID" value="AAA60586.1"/>
    <property type="molecule type" value="mRNA"/>
</dbReference>
<dbReference type="EMBL" id="AB047857">
    <property type="protein sequence ID" value="BAB40419.1"/>
    <property type="molecule type" value="Genomic_DNA"/>
</dbReference>
<dbReference type="EMBL" id="EF560740">
    <property type="protein sequence ID" value="ABQ59050.1"/>
    <property type="molecule type" value="mRNA"/>
</dbReference>
<dbReference type="EMBL" id="AY884245">
    <property type="protein sequence ID" value="AAW56942.1"/>
    <property type="molecule type" value="Genomic_DNA"/>
</dbReference>
<dbReference type="EMBL" id="AK316597">
    <property type="protein sequence ID" value="BAG38184.1"/>
    <property type="molecule type" value="mRNA"/>
</dbReference>
<dbReference type="EMBL" id="CH471053">
    <property type="protein sequence ID" value="EAX00478.1"/>
    <property type="molecule type" value="Genomic_DNA"/>
</dbReference>
<dbReference type="EMBL" id="BC112252">
    <property type="protein sequence ID" value="AAI12253.1"/>
    <property type="molecule type" value="mRNA"/>
</dbReference>
<dbReference type="EMBL" id="BC113641">
    <property type="protein sequence ID" value="AAI13642.1"/>
    <property type="molecule type" value="mRNA"/>
</dbReference>
<dbReference type="EMBL" id="L03843">
    <property type="status" value="NOT_ANNOTATED_CDS"/>
    <property type="molecule type" value="Genomic_DNA"/>
</dbReference>
<dbReference type="CCDS" id="CCDS74503.1"/>
<dbReference type="PIR" id="A49169">
    <property type="entry name" value="A49169"/>
</dbReference>
<dbReference type="RefSeq" id="NP_000339.2">
    <property type="nucleotide sequence ID" value="NM_000348.3"/>
</dbReference>
<dbReference type="PDB" id="7BW1">
    <property type="method" value="X-ray"/>
    <property type="resolution" value="2.80 A"/>
    <property type="chains" value="A=1-254"/>
</dbReference>
<dbReference type="PDBsum" id="7BW1"/>
<dbReference type="SMR" id="P31213"/>
<dbReference type="BioGRID" id="112594">
    <property type="interactions" value="5"/>
</dbReference>
<dbReference type="FunCoup" id="P31213">
    <property type="interactions" value="107"/>
</dbReference>
<dbReference type="IntAct" id="P31213">
    <property type="interactions" value="5"/>
</dbReference>
<dbReference type="STRING" id="9606.ENSP00000477587"/>
<dbReference type="BindingDB" id="P31213"/>
<dbReference type="ChEMBL" id="CHEMBL1856"/>
<dbReference type="DrugBank" id="DB00548">
    <property type="generic name" value="Azelaic acid"/>
</dbReference>
<dbReference type="DrugBank" id="DB01126">
    <property type="generic name" value="Dutasteride"/>
</dbReference>
<dbReference type="DrugBank" id="DB01216">
    <property type="generic name" value="Finasteride"/>
</dbReference>
<dbReference type="DrugBank" id="DB00741">
    <property type="generic name" value="Hydrocortisone"/>
</dbReference>
<dbReference type="DrugBank" id="DB00717">
    <property type="generic name" value="Norethisterone"/>
</dbReference>
<dbReference type="DrugBank" id="DB13943">
    <property type="generic name" value="Testosterone cypionate"/>
</dbReference>
<dbReference type="DrugBank" id="DB13944">
    <property type="generic name" value="Testosterone enanthate"/>
</dbReference>
<dbReference type="DrugBank" id="DB01420">
    <property type="generic name" value="Testosterone propionate"/>
</dbReference>
<dbReference type="DrugBank" id="DB13946">
    <property type="generic name" value="Testosterone undecanoate"/>
</dbReference>
<dbReference type="DrugCentral" id="P31213"/>
<dbReference type="GuidetoPHARMACOLOGY" id="2633"/>
<dbReference type="TCDB" id="2.A.90.3.6">
    <property type="family name" value="the vitamin a receptor/transporter (stra6) family"/>
</dbReference>
<dbReference type="iPTMnet" id="P31213"/>
<dbReference type="PhosphoSitePlus" id="P31213"/>
<dbReference type="BioMuta" id="SRD5A2"/>
<dbReference type="DMDM" id="401056"/>
<dbReference type="MassIVE" id="P31213"/>
<dbReference type="PaxDb" id="9606-ENSP00000477587"/>
<dbReference type="PeptideAtlas" id="P31213"/>
<dbReference type="ProteomicsDB" id="54764"/>
<dbReference type="Antibodypedia" id="72759">
    <property type="antibodies" value="218 antibodies from 26 providers"/>
</dbReference>
<dbReference type="DNASU" id="6716"/>
<dbReference type="Ensembl" id="ENST00000622030.2">
    <property type="protein sequence ID" value="ENSP00000477587.1"/>
    <property type="gene ID" value="ENSG00000277893.2"/>
</dbReference>
<dbReference type="GeneID" id="6716"/>
<dbReference type="KEGG" id="hsa:6716"/>
<dbReference type="MANE-Select" id="ENST00000622030.2">
    <property type="protein sequence ID" value="ENSP00000477587.1"/>
    <property type="RefSeq nucleotide sequence ID" value="NM_000348.4"/>
    <property type="RefSeq protein sequence ID" value="NP_000339.2"/>
</dbReference>
<dbReference type="UCSC" id="uc032nip.2">
    <property type="organism name" value="human"/>
</dbReference>
<dbReference type="AGR" id="HGNC:11285"/>
<dbReference type="CTD" id="6716"/>
<dbReference type="DisGeNET" id="6716"/>
<dbReference type="GeneCards" id="SRD5A2"/>
<dbReference type="HGNC" id="HGNC:11285">
    <property type="gene designation" value="SRD5A2"/>
</dbReference>
<dbReference type="HPA" id="ENSG00000277893">
    <property type="expression patterns" value="Group enriched (epididymis, fallopian tube, liver, prostate, seminal vesicle)"/>
</dbReference>
<dbReference type="MalaCards" id="SRD5A2"/>
<dbReference type="MIM" id="264600">
    <property type="type" value="phenotype"/>
</dbReference>
<dbReference type="MIM" id="607306">
    <property type="type" value="gene"/>
</dbReference>
<dbReference type="neXtProt" id="NX_P31213"/>
<dbReference type="OpenTargets" id="ENSG00000277893"/>
<dbReference type="Orphanet" id="753">
    <property type="disease" value="46,XY difference of sex development due to 5-alpha-reductase 2 deficiency"/>
</dbReference>
<dbReference type="Orphanet" id="1331">
    <property type="disease" value="Familial prostate cancer"/>
</dbReference>
<dbReference type="PharmGKB" id="PA36113"/>
<dbReference type="VEuPathDB" id="HostDB:ENSG00000277893"/>
<dbReference type="eggNOG" id="KOG1638">
    <property type="taxonomic scope" value="Eukaryota"/>
</dbReference>
<dbReference type="GeneTree" id="ENSGT00950000182886"/>
<dbReference type="HOGENOM" id="CLU_065395_1_1_1"/>
<dbReference type="InParanoid" id="P31213"/>
<dbReference type="OMA" id="PEEWYTD"/>
<dbReference type="OrthoDB" id="5788137at2759"/>
<dbReference type="PAN-GO" id="P31213">
    <property type="GO annotations" value="2 GO annotations based on evolutionary models"/>
</dbReference>
<dbReference type="PhylomeDB" id="P31213"/>
<dbReference type="BioCyc" id="MetaCyc:HS00619-MONOMER"/>
<dbReference type="BRENDA" id="1.3.1.22">
    <property type="organism ID" value="2681"/>
</dbReference>
<dbReference type="BRENDA" id="1.3.99.5">
    <property type="organism ID" value="2681"/>
</dbReference>
<dbReference type="PathwayCommons" id="P31213"/>
<dbReference type="Reactome" id="R-HSA-193048">
    <property type="pathway name" value="Androgen biosynthesis"/>
</dbReference>
<dbReference type="SignaLink" id="P31213"/>
<dbReference type="BioGRID-ORCS" id="6716">
    <property type="hits" value="8 hits in 266 CRISPR screens"/>
</dbReference>
<dbReference type="ChiTaRS" id="SRD5A2">
    <property type="organism name" value="human"/>
</dbReference>
<dbReference type="GeneWiki" id="SRD5A2"/>
<dbReference type="GenomeRNAi" id="6716"/>
<dbReference type="Pharos" id="P31213">
    <property type="development level" value="Tclin"/>
</dbReference>
<dbReference type="PRO" id="PR:P31213"/>
<dbReference type="Proteomes" id="UP000005640">
    <property type="component" value="Chromosome 2"/>
</dbReference>
<dbReference type="RNAct" id="P31213">
    <property type="molecule type" value="protein"/>
</dbReference>
<dbReference type="Bgee" id="ENSG00000277893">
    <property type="expression patterns" value="Expressed in corpus epididymis and 57 other cell types or tissues"/>
</dbReference>
<dbReference type="GO" id="GO:0070852">
    <property type="term" value="C:cell body fiber"/>
    <property type="evidence" value="ECO:0007669"/>
    <property type="project" value="Ensembl"/>
</dbReference>
<dbReference type="GO" id="GO:0005789">
    <property type="term" value="C:endoplasmic reticulum membrane"/>
    <property type="evidence" value="ECO:0000304"/>
    <property type="project" value="Reactome"/>
</dbReference>
<dbReference type="GO" id="GO:0043025">
    <property type="term" value="C:neuronal cell body"/>
    <property type="evidence" value="ECO:0007669"/>
    <property type="project" value="Ensembl"/>
</dbReference>
<dbReference type="GO" id="GO:0047751">
    <property type="term" value="F:3-oxo-5-alpha-steroid 4-dehydrogenase (NADP+) activity"/>
    <property type="evidence" value="ECO:0000314"/>
    <property type="project" value="UniProtKB"/>
</dbReference>
<dbReference type="GO" id="GO:0003865">
    <property type="term" value="F:3-oxo-5-alpha-steroid 4-dehydrogenase activity"/>
    <property type="evidence" value="ECO:0000318"/>
    <property type="project" value="GO_Central"/>
</dbReference>
<dbReference type="GO" id="GO:0033218">
    <property type="term" value="F:amide binding"/>
    <property type="evidence" value="ECO:0007669"/>
    <property type="project" value="Ensembl"/>
</dbReference>
<dbReference type="GO" id="GO:0030283">
    <property type="term" value="F:testosterone dehydrogenase [NAD(P)+] activity"/>
    <property type="evidence" value="ECO:0000314"/>
    <property type="project" value="UniProtKB"/>
</dbReference>
<dbReference type="GO" id="GO:0006702">
    <property type="term" value="P:androgen biosynthetic process"/>
    <property type="evidence" value="ECO:0000304"/>
    <property type="project" value="Reactome"/>
</dbReference>
<dbReference type="GO" id="GO:0008209">
    <property type="term" value="P:androgen metabolic process"/>
    <property type="evidence" value="ECO:0000314"/>
    <property type="project" value="UniProtKB"/>
</dbReference>
<dbReference type="GO" id="GO:0018879">
    <property type="term" value="P:biphenyl metabolic process"/>
    <property type="evidence" value="ECO:0007669"/>
    <property type="project" value="Ensembl"/>
</dbReference>
<dbReference type="GO" id="GO:0060348">
    <property type="term" value="P:bone development"/>
    <property type="evidence" value="ECO:0007669"/>
    <property type="project" value="Ensembl"/>
</dbReference>
<dbReference type="GO" id="GO:0030154">
    <property type="term" value="P:cell differentiation"/>
    <property type="evidence" value="ECO:0007669"/>
    <property type="project" value="UniProtKB-KW"/>
</dbReference>
<dbReference type="GO" id="GO:0007267">
    <property type="term" value="P:cell-cell signaling"/>
    <property type="evidence" value="ECO:0000304"/>
    <property type="project" value="UniProtKB"/>
</dbReference>
<dbReference type="GO" id="GO:0018894">
    <property type="term" value="P:dibenzo-p-dioxin metabolic process"/>
    <property type="evidence" value="ECO:0007669"/>
    <property type="project" value="Ensembl"/>
</dbReference>
<dbReference type="GO" id="GO:0030540">
    <property type="term" value="P:female genitalia development"/>
    <property type="evidence" value="ECO:0007669"/>
    <property type="project" value="Ensembl"/>
</dbReference>
<dbReference type="GO" id="GO:0021766">
    <property type="term" value="P:hippocampus development"/>
    <property type="evidence" value="ECO:0007669"/>
    <property type="project" value="Ensembl"/>
</dbReference>
<dbReference type="GO" id="GO:0021854">
    <property type="term" value="P:hypothalamus development"/>
    <property type="evidence" value="ECO:0007669"/>
    <property type="project" value="Ensembl"/>
</dbReference>
<dbReference type="GO" id="GO:0030539">
    <property type="term" value="P:male genitalia development"/>
    <property type="evidence" value="ECO:0007669"/>
    <property type="project" value="Ensembl"/>
</dbReference>
<dbReference type="GO" id="GO:0008584">
    <property type="term" value="P:male gonad development"/>
    <property type="evidence" value="ECO:0000315"/>
    <property type="project" value="UniProtKB"/>
</dbReference>
<dbReference type="GO" id="GO:0018963">
    <property type="term" value="P:phthalate metabolic process"/>
    <property type="evidence" value="ECO:0007669"/>
    <property type="project" value="Ensembl"/>
</dbReference>
<dbReference type="GO" id="GO:1904614">
    <property type="term" value="P:response to biphenyl"/>
    <property type="evidence" value="ECO:0007669"/>
    <property type="project" value="Ensembl"/>
</dbReference>
<dbReference type="GO" id="GO:0032354">
    <property type="term" value="P:response to follicle-stimulating hormone"/>
    <property type="evidence" value="ECO:0007669"/>
    <property type="project" value="Ensembl"/>
</dbReference>
<dbReference type="GO" id="GO:0031667">
    <property type="term" value="P:response to nutrient levels"/>
    <property type="evidence" value="ECO:0007669"/>
    <property type="project" value="Ensembl"/>
</dbReference>
<dbReference type="GO" id="GO:0043434">
    <property type="term" value="P:response to peptide hormone"/>
    <property type="evidence" value="ECO:0007669"/>
    <property type="project" value="Ensembl"/>
</dbReference>
<dbReference type="GO" id="GO:0048545">
    <property type="term" value="P:response to steroid hormone"/>
    <property type="evidence" value="ECO:0007669"/>
    <property type="project" value="Ensembl"/>
</dbReference>
<dbReference type="GO" id="GO:0033574">
    <property type="term" value="P:response to testosterone"/>
    <property type="evidence" value="ECO:0007669"/>
    <property type="project" value="Ensembl"/>
</dbReference>
<dbReference type="GO" id="GO:0009410">
    <property type="term" value="P:response to xenobiotic stimulus"/>
    <property type="evidence" value="ECO:0007669"/>
    <property type="project" value="Ensembl"/>
</dbReference>
<dbReference type="GO" id="GO:0006694">
    <property type="term" value="P:steroid biosynthetic process"/>
    <property type="evidence" value="ECO:0000318"/>
    <property type="project" value="GO_Central"/>
</dbReference>
<dbReference type="GO" id="GO:0006706">
    <property type="term" value="P:steroid catabolic process"/>
    <property type="evidence" value="ECO:0007669"/>
    <property type="project" value="Ensembl"/>
</dbReference>
<dbReference type="GO" id="GO:0061370">
    <property type="term" value="P:testosterone biosynthetic process"/>
    <property type="evidence" value="ECO:0000314"/>
    <property type="project" value="UniProtKB"/>
</dbReference>
<dbReference type="FunFam" id="1.20.120.1630:FF:000002">
    <property type="entry name" value="Steroid 5 alpha-reductase 1"/>
    <property type="match status" value="1"/>
</dbReference>
<dbReference type="Gene3D" id="1.20.120.1630">
    <property type="match status" value="1"/>
</dbReference>
<dbReference type="InterPro" id="IPR016636">
    <property type="entry name" value="3-oxo-5-alpha-steroid_4-DH"/>
</dbReference>
<dbReference type="InterPro" id="IPR001104">
    <property type="entry name" value="3-oxo-5_a-steroid_4-DH_C"/>
</dbReference>
<dbReference type="InterPro" id="IPR039357">
    <property type="entry name" value="SRD5A/TECR"/>
</dbReference>
<dbReference type="PANTHER" id="PTHR10556">
    <property type="entry name" value="3-OXO-5-ALPHA-STEROID 4-DEHYDROGENASE"/>
    <property type="match status" value="1"/>
</dbReference>
<dbReference type="PANTHER" id="PTHR10556:SF37">
    <property type="entry name" value="3-OXO-5-ALPHA-STEROID 4-DEHYDROGENASE 2"/>
    <property type="match status" value="1"/>
</dbReference>
<dbReference type="Pfam" id="PF02544">
    <property type="entry name" value="Steroid_dh"/>
    <property type="match status" value="1"/>
</dbReference>
<dbReference type="PIRSF" id="PIRSF015596">
    <property type="entry name" value="5_alpha-SR2"/>
    <property type="match status" value="1"/>
</dbReference>
<dbReference type="PROSITE" id="PS50244">
    <property type="entry name" value="S5A_REDUCTASE"/>
    <property type="match status" value="1"/>
</dbReference>
<feature type="chain" id="PRO_0000213676" description="3-oxo-5-alpha-steroid 4-dehydrogenase 2">
    <location>
        <begin position="1"/>
        <end position="254"/>
    </location>
</feature>
<feature type="transmembrane region" description="Helical" evidence="1">
    <location>
        <begin position="8"/>
        <end position="28"/>
    </location>
</feature>
<feature type="transmembrane region" description="Helical" evidence="1">
    <location>
        <begin position="72"/>
        <end position="92"/>
    </location>
</feature>
<feature type="transmembrane region" description="Helical" evidence="1">
    <location>
        <begin position="146"/>
        <end position="166"/>
    </location>
</feature>
<feature type="transmembrane region" description="Helical" evidence="1">
    <location>
        <begin position="206"/>
        <end position="226"/>
    </location>
</feature>
<feature type="sequence variant" id="VAR_077546" description="No effect on affinity for testosterone; no effect on affinity for NADPH; no effect on Vmax; dbSNP:rs61748120." evidence="4">
    <original>C</original>
    <variation>R</variation>
    <location>
        <position position="5"/>
    </location>
</feature>
<feature type="sequence variant" id="VAR_087980" description="Found in individual with micropenis; dbSNP:rs104893667." evidence="6">
    <location>
        <begin position="26"/>
        <end position="254"/>
    </location>
</feature>
<feature type="sequence variant" id="VAR_077547" description="Increased affinity for testosterone; increased affinity for NADPH; decreased Vmax." evidence="4">
    <original>P</original>
    <variation>L</variation>
    <location>
        <position position="30"/>
    </location>
</feature>
<feature type="sequence variant" id="VAR_087981" description="Found in individual with micropenis; uncertain significance; dbSNP:rs782032018." evidence="6">
    <original>G</original>
    <variation>R</variation>
    <location>
        <position position="34"/>
    </location>
</feature>
<feature type="sequence variant" id="VAR_077548" description="Increased affinity for testosterone; increased affinity for NADPH; decreased Vmax; dbSNP:rs61748122." evidence="4">
    <original>P</original>
    <variation>R</variation>
    <location>
        <position position="48"/>
    </location>
</feature>
<feature type="sequence variant" id="VAR_013104" description="Increased affinity for testosterone; no effect on affinity for NADPH; increased Vmax; dbSNP:rs9282858." evidence="2 4 7 12 14 22">
    <original>A</original>
    <variation>T</variation>
    <location>
        <position position="49"/>
    </location>
</feature>
<feature type="sequence variant" id="VAR_077549" description="No effect on affinity for testosterone; increased affinity for NADPH; decreased Vmax; dbSNP:rs61748123." evidence="4">
    <original>A</original>
    <variation>T</variation>
    <location>
        <position position="51"/>
    </location>
</feature>
<feature type="sequence variant" id="VAR_013105" description="In PPSH; dbSNP:rs121434245." evidence="18">
    <original>L</original>
    <variation>Q</variation>
    <location>
        <position position="55"/>
    </location>
</feature>
<feature type="sequence variant" id="VAR_013130" description="In PPSH; dbSNP:rs1351269392." evidence="3">
    <original>G</original>
    <variation>D</variation>
    <location>
        <position position="85"/>
    </location>
</feature>
<feature type="sequence variant" id="VAR_013131" description="No effect on affinity for testosterone; no effect on affinity for NADPH; increased Vmax; dbSNP:rs523349." evidence="4 6 8 12 14 15 22 23">
    <original>L</original>
    <variation>V</variation>
    <location>
        <position position="89"/>
    </location>
</feature>
<feature type="sequence variant" id="VAR_022302" description="In dbSNP:rs28383048." evidence="22">
    <original>L</original>
    <variation>V</variation>
    <location>
        <position position="113"/>
    </location>
</feature>
<feature type="sequence variant" id="VAR_013106" description="In PPSH; dbSNP:rs121434246." evidence="3 11 17">
    <original>G</original>
    <variation>D</variation>
    <location>
        <position position="115"/>
    </location>
</feature>
<feature type="sequence variant" id="VAR_025854" description="In PPSH; dbSNP:rs1331249320." evidence="13">
    <original>G</original>
    <variation>R</variation>
    <location>
        <position position="123"/>
    </location>
</feature>
<feature type="sequence variant" id="VAR_025855" description="In PPSH; dbSNP:rs368386747." evidence="12">
    <original>Q</original>
    <variation>R</variation>
    <location>
        <position position="126"/>
    </location>
</feature>
<feature type="sequence variant" id="VAR_025851" description="In PPSH; dbSNP:rs759561106." evidence="14">
    <original>R</original>
    <variation>W</variation>
    <location>
        <position position="145"/>
    </location>
</feature>
<feature type="sequence variant" id="VAR_013107" description="In PPSH." evidence="16">
    <location>
        <position position="157"/>
    </location>
</feature>
<feature type="sequence variant" id="VAR_025856" description="In PPSH." evidence="12">
    <original>G</original>
    <variation>R</variation>
    <location>
        <position position="158"/>
    </location>
</feature>
<feature type="sequence variant" id="VAR_025852" description="In PPSH; dbSNP:rs1057517829." evidence="14">
    <original>P</original>
    <variation>L</variation>
    <location>
        <position position="181"/>
    </location>
</feature>
<feature type="sequence variant" id="VAR_013108" description="In PPSH; dbSNP:rs121434247." evidence="12 17">
    <original>G</original>
    <variation>S</variation>
    <location>
        <position position="183"/>
    </location>
</feature>
<feature type="sequence variant" id="VAR_077550" description="No effect on affinity for testosterone; increased affinity for NADPH; decreased Vmax; dbSNP:rs61748125." evidence="4">
    <original>T</original>
    <variation>M</variation>
    <location>
        <position position="187"/>
    </location>
</feature>
<feature type="sequence variant" id="VAR_077551" description="No effect on affinity for testosterone; increased affinity for NADPH; increased Vmax; dbSNP:rs61748126." evidence="4">
    <original>F</original>
    <variation>L</variation>
    <location>
        <position position="194"/>
    </location>
</feature>
<feature type="sequence variant" id="VAR_013109" description="In PPSH; dbSNP:rs121434250." evidence="12 14 20">
    <original>G</original>
    <variation>S</variation>
    <location>
        <position position="196"/>
    </location>
</feature>
<feature type="sequence variant" id="VAR_013110" description="In PPSH; dbSNP:rs121434253." evidence="5">
    <original>E</original>
    <variation>D</variation>
    <location>
        <position position="197"/>
    </location>
</feature>
<feature type="sequence variant" id="VAR_013132" description="In PPSH; dbSNP:rs756853742." evidence="19">
    <original>E</original>
    <variation>K</variation>
    <location>
        <position position="200"/>
    </location>
</feature>
<feature type="sequence variant" id="VAR_059791" description="In dbSNP:rs9332961.">
    <original>G</original>
    <variation>S</variation>
    <location>
        <position position="203"/>
    </location>
</feature>
<feature type="sequence variant" id="VAR_025857" description="In PPSH; dbSNP:rs767564684." evidence="12">
    <original>A</original>
    <variation>D</variation>
    <location>
        <position position="207"/>
    </location>
</feature>
<feature type="sequence variant" id="VAR_013111" description="In PPSH; dbSNP:rs121434252." evidence="3 5">
    <original>P</original>
    <variation>R</variation>
    <location>
        <position position="212"/>
    </location>
</feature>
<feature type="sequence variant" id="VAR_059792" description="In dbSNP:rs9332963.">
    <original>L</original>
    <variation>H</variation>
    <location>
        <position position="224"/>
    </location>
</feature>
<feature type="sequence variant" id="VAR_037585" description="In dbSNP:rs9332963.">
    <original>L</original>
    <variation>M</variation>
    <location>
        <position position="224"/>
    </location>
</feature>
<feature type="sequence variant" id="VAR_037586" description="In PPSH; also found in individuals with micropenis; increased affinity for testosterone; increased affinity for NADPH; decreased Vmax; dbSNP:rs9332964." evidence="4 6 9">
    <original>R</original>
    <variation>Q</variation>
    <location>
        <position position="227"/>
    </location>
</feature>
<feature type="sequence variant" id="VAR_013112" description="In PPSH; dbSNP:rs121434249." evidence="21">
    <original>A</original>
    <variation>T</variation>
    <location>
        <position position="228"/>
    </location>
</feature>
<feature type="sequence variant" id="VAR_013113" description="In PPSH; dbSNP:rs121434251." evidence="20">
    <original>H</original>
    <variation>R</variation>
    <location>
        <position position="231"/>
    </location>
</feature>
<feature type="sequence variant" id="VAR_077552" description="Increased affinity for testosterone; increased affinity for NADPH; decreased Vmax; dbSNP:rs9332966 and dbSNP:rs1378704759." evidence="4">
    <original>F</original>
    <variation>L</variation>
    <location>
        <position position="234"/>
    </location>
</feature>
<feature type="sequence variant" id="VAR_025853" description="In PPSH; dbSNP:rs772283403." evidence="14">
    <original>Y</original>
    <variation>F</variation>
    <location>
        <position position="235"/>
    </location>
</feature>
<feature type="sequence variant" id="VAR_013133" description="In PPSH; dbSNP:rs145712014." evidence="3">
    <original>S</original>
    <variation>Y</variation>
    <location>
        <position position="245"/>
    </location>
</feature>
<feature type="sequence variant" id="VAR_013134" description="In PPSH; dbSNP:rs9332967." evidence="3 14">
    <original>R</original>
    <variation>Q</variation>
    <location>
        <position position="246"/>
    </location>
</feature>
<feature type="sequence variant" id="VAR_005609" description="In PPSH; dbSNP:rs121434244." evidence="10 11 12 17">
    <original>R</original>
    <variation>W</variation>
    <location>
        <position position="246"/>
    </location>
</feature>
<feature type="helix" evidence="26">
    <location>
        <begin position="8"/>
        <end position="27"/>
    </location>
</feature>
<feature type="strand" evidence="26">
    <location>
        <begin position="33"/>
        <end position="35"/>
    </location>
</feature>
<feature type="helix" evidence="26">
    <location>
        <begin position="49"/>
        <end position="57"/>
    </location>
</feature>
<feature type="helix" evidence="26">
    <location>
        <begin position="59"/>
        <end position="68"/>
    </location>
</feature>
<feature type="strand" evidence="26">
    <location>
        <begin position="75"/>
        <end position="77"/>
    </location>
</feature>
<feature type="helix" evidence="26">
    <location>
        <begin position="79"/>
        <end position="96"/>
    </location>
</feature>
<feature type="helix" evidence="26">
    <location>
        <begin position="99"/>
        <end position="101"/>
    </location>
</feature>
<feature type="helix" evidence="26">
    <location>
        <begin position="109"/>
        <end position="132"/>
    </location>
</feature>
<feature type="helix" evidence="26">
    <location>
        <begin position="144"/>
        <end position="168"/>
    </location>
</feature>
<feature type="turn" evidence="26">
    <location>
        <begin position="184"/>
        <end position="188"/>
    </location>
</feature>
<feature type="helix" evidence="26">
    <location>
        <begin position="192"/>
        <end position="208"/>
    </location>
</feature>
<feature type="helix" evidence="26">
    <location>
        <begin position="211"/>
        <end position="238"/>
    </location>
</feature>
<feature type="strand" evidence="26">
    <location>
        <begin position="247"/>
        <end position="250"/>
    </location>
</feature>
<feature type="turn" evidence="26">
    <location>
        <begin position="251"/>
        <end position="253"/>
    </location>
</feature>
<organism>
    <name type="scientific">Homo sapiens</name>
    <name type="common">Human</name>
    <dbReference type="NCBI Taxonomy" id="9606"/>
    <lineage>
        <taxon>Eukaryota</taxon>
        <taxon>Metazoa</taxon>
        <taxon>Chordata</taxon>
        <taxon>Craniata</taxon>
        <taxon>Vertebrata</taxon>
        <taxon>Euteleostomi</taxon>
        <taxon>Mammalia</taxon>
        <taxon>Eutheria</taxon>
        <taxon>Euarchontoglires</taxon>
        <taxon>Primates</taxon>
        <taxon>Haplorrhini</taxon>
        <taxon>Catarrhini</taxon>
        <taxon>Hominidae</taxon>
        <taxon>Homo</taxon>
    </lineage>
</organism>
<name>S5A2_HUMAN</name>
<accession>P31213</accession>
<accession>B2RE87</accession>
<accession>Q2M1R4</accession>
<accession>Q9BYE6</accession>
<proteinExistence type="evidence at protein level"/>
<comment type="function">
    <text evidence="4">Converts testosterone (T) into 5-alpha-dihydrotestosterone (DHT) and progesterone or corticosterone into their corresponding 5-alpha-3-oxosteroids. It plays a central role in sexual differentiation and androgen physiology.</text>
</comment>
<comment type="catalytic activity">
    <reaction evidence="4">
        <text>a 3-oxo-5alpha-steroid + NADP(+) = a 3-oxo-Delta(4)-steroid + NADPH + H(+)</text>
        <dbReference type="Rhea" id="RHEA:54384"/>
        <dbReference type="ChEBI" id="CHEBI:13601"/>
        <dbReference type="ChEBI" id="CHEBI:15378"/>
        <dbReference type="ChEBI" id="CHEBI:47909"/>
        <dbReference type="ChEBI" id="CHEBI:57783"/>
        <dbReference type="ChEBI" id="CHEBI:58349"/>
        <dbReference type="EC" id="1.3.1.22"/>
    </reaction>
</comment>
<comment type="catalytic activity">
    <reaction evidence="4">
        <text>17beta-hydroxy-5alpha-androstan-3-one + NADP(+) = testosterone + NADPH + H(+)</text>
        <dbReference type="Rhea" id="RHEA:50820"/>
        <dbReference type="ChEBI" id="CHEBI:15378"/>
        <dbReference type="ChEBI" id="CHEBI:16330"/>
        <dbReference type="ChEBI" id="CHEBI:17347"/>
        <dbReference type="ChEBI" id="CHEBI:57783"/>
        <dbReference type="ChEBI" id="CHEBI:58349"/>
        <dbReference type="EC" id="1.3.1.22"/>
    </reaction>
    <physiologicalReaction direction="right-to-left" evidence="25">
        <dbReference type="Rhea" id="RHEA:50822"/>
    </physiologicalReaction>
</comment>
<comment type="catalytic activity">
    <reaction evidence="4">
        <text>5alpha-pregnane-3,20-dione + NADP(+) = progesterone + NADPH + H(+)</text>
        <dbReference type="Rhea" id="RHEA:21952"/>
        <dbReference type="ChEBI" id="CHEBI:15378"/>
        <dbReference type="ChEBI" id="CHEBI:17026"/>
        <dbReference type="ChEBI" id="CHEBI:28952"/>
        <dbReference type="ChEBI" id="CHEBI:57783"/>
        <dbReference type="ChEBI" id="CHEBI:58349"/>
        <dbReference type="EC" id="1.3.1.22"/>
    </reaction>
    <physiologicalReaction direction="right-to-left" evidence="25">
        <dbReference type="Rhea" id="RHEA:21954"/>
    </physiologicalReaction>
</comment>
<comment type="biophysicochemical properties">
    <kinetics>
        <KM evidence="4">0.9 uM for testosterone (at pH 6.0)</KM>
        <KM evidence="4">8 uM for NADPH (at pH 6.0)</KM>
        <Vmax evidence="4">1.9 nmol/min/mg enzyme with testosterone as substrate with NADPH as cofactor (at pH 6.0)</Vmax>
    </kinetics>
    <phDependence>
        <text>Optimally active at acidic pHs.</text>
    </phDependence>
</comment>
<comment type="interaction">
    <interactant intactId="EBI-13130472">
        <id>P31213</id>
    </interactant>
    <interactant intactId="EBI-2873194">
        <id>O96005</id>
        <label>CLPTM1</label>
    </interactant>
    <organismsDiffer>false</organismsDiffer>
    <experiments>3</experiments>
</comment>
<comment type="interaction">
    <interactant intactId="EBI-13130472">
        <id>P31213</id>
    </interactant>
    <interactant intactId="EBI-3867333">
        <id>A8MQ03</id>
        <label>CYSRT1</label>
    </interactant>
    <organismsDiffer>false</organismsDiffer>
    <experiments>3</experiments>
</comment>
<comment type="interaction">
    <interactant intactId="EBI-13130472">
        <id>P31213</id>
    </interactant>
    <interactant intactId="EBI-744239">
        <id>Q14749</id>
        <label>GNMT</label>
    </interactant>
    <organismsDiffer>false</organismsDiffer>
    <experiments>3</experiments>
</comment>
<comment type="subcellular location">
    <subcellularLocation>
        <location>Microsome membrane</location>
        <topology>Multi-pass membrane protein</topology>
    </subcellularLocation>
    <subcellularLocation>
        <location evidence="24">Endoplasmic reticulum membrane</location>
        <topology evidence="24">Multi-pass membrane protein</topology>
    </subcellularLocation>
</comment>
<comment type="tissue specificity">
    <text>Expressed in high levels in the prostate and many other androgen-sensitive tissues.</text>
</comment>
<comment type="polymorphism">
    <text evidence="2">Individuals with Thr-49 have an increased risk of prostate cancer (PubMed:10501358). The enzyme with Thr-49 has a higher in vitro V(max) than the Ala-49 enzyme (PubMed:10501358).</text>
</comment>
<comment type="disease" evidence="3 4 5 6 9 10 11 12 13 14 16 17 18 19 20 21">
    <disease id="DI-02230">
        <name>Pseudovaginal perineoscrotal hypospadias</name>
        <acronym>PPSH</acronym>
        <description>A form of male pseudohermaphroditism in which 46,XY males show ambiguous genitalia at birth, including perineal hypospadias and a blind perineal pouch, and develop masculinization at puberty. The name of the disorder stems from the finding of a blind-ending perineal opening resembling a vagina and a severely hypospadiac penis with the urethra opening onto the perineum.</description>
        <dbReference type="MIM" id="264600"/>
    </disease>
    <text>The disease is caused by variants affecting the gene represented in this entry.</text>
</comment>
<comment type="similarity">
    <text evidence="24">Belongs to the steroid 5-alpha reductase family.</text>
</comment>
<comment type="online information" name="Wikipedia">
    <link uri="https://en.wikipedia.org/wiki/5_alpha_reductase"/>
    <text>5-alpha reductase entry</text>
</comment>
<reference key="1">
    <citation type="journal article" date="1991" name="Nature">
        <title>Deletion of steroid 5 alpha-reductase 2 gene in male pseudohermaphroditism.</title>
        <authorList>
            <person name="Andersson S."/>
            <person name="Berman D.M."/>
            <person name="Jenkins E.P."/>
            <person name="Russell D.W."/>
        </authorList>
    </citation>
    <scope>NUCLEOTIDE SEQUENCE [MRNA]</scope>
    <scope>VARIANT VAL-89</scope>
</reference>
<reference key="2">
    <citation type="journal article" date="1992" name="Endocrinology">
        <title>Structure of human type II 5 alpha-reductase gene.</title>
        <authorList>
            <person name="Labrie F."/>
            <person name="Sugimoto Y."/>
            <person name="Luu-The V."/>
            <person name="Simard J."/>
            <person name="Lachance Y."/>
            <person name="Bachvarov D."/>
            <person name="Leblanc G."/>
            <person name="Durocher F."/>
            <person name="Paquet N."/>
        </authorList>
    </citation>
    <scope>NUCLEOTIDE SEQUENCE [GENOMIC DNA]</scope>
</reference>
<reference key="3">
    <citation type="submission" date="2007-04" db="EMBL/GenBank/DDBJ databases">
        <authorList>
            <person name="Schupp I."/>
        </authorList>
    </citation>
    <scope>NUCLEOTIDE SEQUENCE [MRNA]</scope>
    <source>
        <tissue>Liver tumor</tissue>
    </source>
</reference>
<reference key="4">
    <citation type="submission" date="2005-01" db="EMBL/GenBank/DDBJ databases">
        <authorList>
            <consortium name="NIEHS SNPs program"/>
        </authorList>
    </citation>
    <scope>NUCLEOTIDE SEQUENCE [GENOMIC DNA]</scope>
    <scope>VARIANTS THR-49; VAL-89 AND VAL-113</scope>
</reference>
<reference key="5">
    <citation type="journal article" date="2004" name="Nat. Genet.">
        <title>Complete sequencing and characterization of 21,243 full-length human cDNAs.</title>
        <authorList>
            <person name="Ota T."/>
            <person name="Suzuki Y."/>
            <person name="Nishikawa T."/>
            <person name="Otsuki T."/>
            <person name="Sugiyama T."/>
            <person name="Irie R."/>
            <person name="Wakamatsu A."/>
            <person name="Hayashi K."/>
            <person name="Sato H."/>
            <person name="Nagai K."/>
            <person name="Kimura K."/>
            <person name="Makita H."/>
            <person name="Sekine M."/>
            <person name="Obayashi M."/>
            <person name="Nishi T."/>
            <person name="Shibahara T."/>
            <person name="Tanaka T."/>
            <person name="Ishii S."/>
            <person name="Yamamoto J."/>
            <person name="Saito K."/>
            <person name="Kawai Y."/>
            <person name="Isono Y."/>
            <person name="Nakamura Y."/>
            <person name="Nagahari K."/>
            <person name="Murakami K."/>
            <person name="Yasuda T."/>
            <person name="Iwayanagi T."/>
            <person name="Wagatsuma M."/>
            <person name="Shiratori A."/>
            <person name="Sudo H."/>
            <person name="Hosoiri T."/>
            <person name="Kaku Y."/>
            <person name="Kodaira H."/>
            <person name="Kondo H."/>
            <person name="Sugawara M."/>
            <person name="Takahashi M."/>
            <person name="Kanda K."/>
            <person name="Yokoi T."/>
            <person name="Furuya T."/>
            <person name="Kikkawa E."/>
            <person name="Omura Y."/>
            <person name="Abe K."/>
            <person name="Kamihara K."/>
            <person name="Katsuta N."/>
            <person name="Sato K."/>
            <person name="Tanikawa M."/>
            <person name="Yamazaki M."/>
            <person name="Ninomiya K."/>
            <person name="Ishibashi T."/>
            <person name="Yamashita H."/>
            <person name="Murakawa K."/>
            <person name="Fujimori K."/>
            <person name="Tanai H."/>
            <person name="Kimata M."/>
            <person name="Watanabe M."/>
            <person name="Hiraoka S."/>
            <person name="Chiba Y."/>
            <person name="Ishida S."/>
            <person name="Ono Y."/>
            <person name="Takiguchi S."/>
            <person name="Watanabe S."/>
            <person name="Yosida M."/>
            <person name="Hotuta T."/>
            <person name="Kusano J."/>
            <person name="Kanehori K."/>
            <person name="Takahashi-Fujii A."/>
            <person name="Hara H."/>
            <person name="Tanase T.-O."/>
            <person name="Nomura Y."/>
            <person name="Togiya S."/>
            <person name="Komai F."/>
            <person name="Hara R."/>
            <person name="Takeuchi K."/>
            <person name="Arita M."/>
            <person name="Imose N."/>
            <person name="Musashino K."/>
            <person name="Yuuki H."/>
            <person name="Oshima A."/>
            <person name="Sasaki N."/>
            <person name="Aotsuka S."/>
            <person name="Yoshikawa Y."/>
            <person name="Matsunawa H."/>
            <person name="Ichihara T."/>
            <person name="Shiohata N."/>
            <person name="Sano S."/>
            <person name="Moriya S."/>
            <person name="Momiyama H."/>
            <person name="Satoh N."/>
            <person name="Takami S."/>
            <person name="Terashima Y."/>
            <person name="Suzuki O."/>
            <person name="Nakagawa S."/>
            <person name="Senoh A."/>
            <person name="Mizoguchi H."/>
            <person name="Goto Y."/>
            <person name="Shimizu F."/>
            <person name="Wakebe H."/>
            <person name="Hishigaki H."/>
            <person name="Watanabe T."/>
            <person name="Sugiyama A."/>
            <person name="Takemoto M."/>
            <person name="Kawakami B."/>
            <person name="Yamazaki M."/>
            <person name="Watanabe K."/>
            <person name="Kumagai A."/>
            <person name="Itakura S."/>
            <person name="Fukuzumi Y."/>
            <person name="Fujimori Y."/>
            <person name="Komiyama M."/>
            <person name="Tashiro H."/>
            <person name="Tanigami A."/>
            <person name="Fujiwara T."/>
            <person name="Ono T."/>
            <person name="Yamada K."/>
            <person name="Fujii Y."/>
            <person name="Ozaki K."/>
            <person name="Hirao M."/>
            <person name="Ohmori Y."/>
            <person name="Kawabata A."/>
            <person name="Hikiji T."/>
            <person name="Kobatake N."/>
            <person name="Inagaki H."/>
            <person name="Ikema Y."/>
            <person name="Okamoto S."/>
            <person name="Okitani R."/>
            <person name="Kawakami T."/>
            <person name="Noguchi S."/>
            <person name="Itoh T."/>
            <person name="Shigeta K."/>
            <person name="Senba T."/>
            <person name="Matsumura K."/>
            <person name="Nakajima Y."/>
            <person name="Mizuno T."/>
            <person name="Morinaga M."/>
            <person name="Sasaki M."/>
            <person name="Togashi T."/>
            <person name="Oyama M."/>
            <person name="Hata H."/>
            <person name="Watanabe M."/>
            <person name="Komatsu T."/>
            <person name="Mizushima-Sugano J."/>
            <person name="Satoh T."/>
            <person name="Shirai Y."/>
            <person name="Takahashi Y."/>
            <person name="Nakagawa K."/>
            <person name="Okumura K."/>
            <person name="Nagase T."/>
            <person name="Nomura N."/>
            <person name="Kikuchi H."/>
            <person name="Masuho Y."/>
            <person name="Yamashita R."/>
            <person name="Nakai K."/>
            <person name="Yada T."/>
            <person name="Nakamura Y."/>
            <person name="Ohara O."/>
            <person name="Isogai T."/>
            <person name="Sugano S."/>
        </authorList>
    </citation>
    <scope>NUCLEOTIDE SEQUENCE [LARGE SCALE MRNA]</scope>
    <scope>VARIANT VAL-89</scope>
</reference>
<reference key="6">
    <citation type="submission" date="2005-09" db="EMBL/GenBank/DDBJ databases">
        <authorList>
            <person name="Mural R.J."/>
            <person name="Istrail S."/>
            <person name="Sutton G.G."/>
            <person name="Florea L."/>
            <person name="Halpern A.L."/>
            <person name="Mobarry C.M."/>
            <person name="Lippert R."/>
            <person name="Walenz B."/>
            <person name="Shatkay H."/>
            <person name="Dew I."/>
            <person name="Miller J.R."/>
            <person name="Flanigan M.J."/>
            <person name="Edwards N.J."/>
            <person name="Bolanos R."/>
            <person name="Fasulo D."/>
            <person name="Halldorsson B.V."/>
            <person name="Hannenhalli S."/>
            <person name="Turner R."/>
            <person name="Yooseph S."/>
            <person name="Lu F."/>
            <person name="Nusskern D.R."/>
            <person name="Shue B.C."/>
            <person name="Zheng X.H."/>
            <person name="Zhong F."/>
            <person name="Delcher A.L."/>
            <person name="Huson D.H."/>
            <person name="Kravitz S.A."/>
            <person name="Mouchard L."/>
            <person name="Reinert K."/>
            <person name="Remington K.A."/>
            <person name="Clark A.G."/>
            <person name="Waterman M.S."/>
            <person name="Eichler E.E."/>
            <person name="Adams M.D."/>
            <person name="Hunkapiller M.W."/>
            <person name="Myers E.W."/>
            <person name="Venter J.C."/>
        </authorList>
    </citation>
    <scope>NUCLEOTIDE SEQUENCE [LARGE SCALE GENOMIC DNA]</scope>
    <scope>VARIANT VAL-89</scope>
</reference>
<reference key="7">
    <citation type="journal article" date="2004" name="Genome Res.">
        <title>The status, quality, and expansion of the NIH full-length cDNA project: the Mammalian Gene Collection (MGC).</title>
        <authorList>
            <consortium name="The MGC Project Team"/>
        </authorList>
    </citation>
    <scope>NUCLEOTIDE SEQUENCE [LARGE SCALE MRNA]</scope>
</reference>
<reference key="8">
    <citation type="submission" date="2000-08" db="EMBL/GenBank/DDBJ databases">
        <title>Transcription of type II 5 alpha-reductase is up-regulated by SRY in human dermal papilla cells.</title>
        <authorList>
            <person name="Nakanishi J."/>
            <person name="Hibino T."/>
        </authorList>
    </citation>
    <scope>NUCLEOTIDE SEQUENCE [GENOMIC DNA] OF 1-67</scope>
    <source>
        <tissue>Placenta</tissue>
    </source>
</reference>
<reference key="9">
    <citation type="journal article" date="1992" name="J. Clin. Invest.">
        <title>Molecular genetics of steroid 5 alpha-reductase 2 deficiency.</title>
        <authorList>
            <person name="Thigpen A.E."/>
            <person name="Davis D.L."/>
            <person name="Milatovich A."/>
            <person name="Mendonca B.B."/>
            <person name="Imperato-Mcginley J."/>
            <person name="Griffin J.E."/>
            <person name="Francke U."/>
            <person name="Wilson J.D."/>
            <person name="Russell D.W."/>
        </authorList>
    </citation>
    <scope>VARIANT PPSH TRP-246</scope>
</reference>
<reference key="10">
    <citation type="journal article" date="1995" name="Clin. Endocrinol. (Oxf.)">
        <title>A new deletion of the 5-alpha-reductase type 2 gene in a Turkish family with 5-alpha-reductase deficiency.</title>
        <authorList>
            <person name="Boudon C."/>
            <person name="Lobaccaro J.-M."/>
            <person name="Lumbroso S."/>
            <person name="Ogur G."/>
            <person name="Ocal G."/>
            <person name="Belon C."/>
            <person name="Sultan C."/>
        </authorList>
    </citation>
    <scope>VARIANT PPSH MET-157 DEL</scope>
</reference>
<reference key="11">
    <citation type="journal article" date="1996" name="J. Clin. Endocrinol. Metab.">
        <title>5-alpha-reductase-2 gene mutations in the Dominican Republic.</title>
        <authorList>
            <person name="Cai L.-Q."/>
            <person name="Zhu Y.-S."/>
            <person name="Katz M.D."/>
            <person name="Herrera C."/>
            <person name="Baez J."/>
            <person name="DeFillo-Ricart M."/>
            <person name="Shackleton C.H.L."/>
            <person name="Imperato-McGinley J."/>
        </authorList>
    </citation>
    <scope>VARIANTS PPSH ASP-115; SER-183 AND TRP-246</scope>
</reference>
<reference key="12">
    <citation type="journal article" date="1996" name="J. Clin. Endocrinol. Metab.">
        <title>Clinical, biochemical, and genetic findings in a large pedigree of male and female patients with 5-alpha-reductase 2 deficiency.</title>
        <authorList>
            <person name="Hochberg Z."/>
            <person name="Chayen R."/>
            <person name="Reiss N."/>
            <person name="Falik Z."/>
            <person name="Makler A."/>
            <person name="Munichor M."/>
            <person name="Farkas A."/>
            <person name="Goldfarb H."/>
            <person name="Ohana N."/>
            <person name="Hiort O."/>
        </authorList>
    </citation>
    <scope>VARIANT PPSH GLN-55</scope>
</reference>
<reference key="13">
    <citation type="journal article" date="1997" name="Mol. Pathol.">
        <title>Male pseudohermaphroditism resulting from a novel mutation in the human steroid 5 alpha-reductase type 2 gene (SRD5A2).</title>
        <authorList>
            <person name="Anwar R."/>
            <person name="Gilbey S.G."/>
            <person name="New J.P."/>
            <person name="Markham A.F."/>
        </authorList>
    </citation>
    <scope>VARIANT PPSH LYS-200</scope>
</reference>
<reference key="14">
    <citation type="journal article" date="1998" name="Am. J. Med. Genet.">
        <title>Homozygous mutation (A228T) in the 5-alpha-reductase type 2 gene in a boy with 5-alpha-reductase deficiency: genotype-phenotype correlations.</title>
        <authorList>
            <person name="Nordenskjold A."/>
            <person name="Magnus O."/>
            <person name="Aagenaes O."/>
            <person name="Knudtzon J."/>
        </authorList>
    </citation>
    <scope>VARIANT PPSH THR-228</scope>
</reference>
<reference key="15">
    <citation type="journal article" date="1998" name="J. Clin. Endocrinol. Metab.">
        <title>Molecular characterization of 5-alpha-reductase type 2 deficiency and fertility in a Swedish family.</title>
        <authorList>
            <person name="Nordenskjold A."/>
            <person name="Ivarsson S.-A."/>
        </authorList>
    </citation>
    <scope>VARIANTS PPSH SER-196 AND ARG-231</scope>
</reference>
<reference key="16">
    <citation type="journal article" date="1999" name="Lancet">
        <title>Association of mis-sense substitution in SRD5A2 gene with prostate cancer in African-American and Hispanic men in Los Angeles, USA.</title>
        <authorList>
            <person name="Makridakis N.M."/>
            <person name="Ross R.K."/>
            <person name="Pike M.C."/>
            <person name="Crocitto L.E."/>
            <person name="Kolonel L.N."/>
            <person name="Pearce C.L."/>
            <person name="Henderson B.E."/>
            <person name="Reichardt J.K.V."/>
        </authorList>
    </citation>
    <scope>VARIANT THR-49</scope>
    <scope>POLYMORPHISM</scope>
</reference>
<reference key="17">
    <citation type="journal article" date="2000" name="Clin. Endocrinol. (Oxf.)">
        <title>Identification of missense mutations in the SRD5A2 gene from patients with steroid 5alpha-reductase 2 deficiency.</title>
        <authorList>
            <person name="Vilchis F."/>
            <person name="Mendez J.P."/>
            <person name="Canto P."/>
            <person name="Lieberman E."/>
            <person name="Chavez B."/>
        </authorList>
    </citation>
    <scope>VARIANTS PPSH ASP-85; ASP-115; ARG-212; TYR-245 AND GLN-246</scope>
</reference>
<reference key="18">
    <citation type="journal article" date="2000" name="J. Clin. Endocrinol. Metab.">
        <title>Uniparental disomy in steroid 5-alpha-reductase 2 deficiency.</title>
        <authorList>
            <person name="Chavez B."/>
            <person name="Valdez E."/>
            <person name="Vilchis F."/>
        </authorList>
    </citation>
    <scope>VARIANTS PPSH ASP-197 AND ARG-212</scope>
</reference>
<reference key="19">
    <citation type="journal article" date="2000" name="Pharmacogenetics">
        <title>Biochemical and pharmacogenetic dissection of human steroid 5 alpha-reductase type II.</title>
        <authorList>
            <person name="Makridakis N.M."/>
            <person name="di Salle E."/>
            <person name="Reichardt J.K."/>
        </authorList>
    </citation>
    <scope>VARIANTS ARG-5; LEU-30; ARG-48; THR-49; THR-51; VAL-89; MET-187; LEU-194 AND LEU-234</scope>
    <scope>VARIANT PPSH GLN-227</scope>
    <scope>FUNCTION</scope>
    <scope>CATALYTIC ACTIVITY</scope>
    <scope>BIOPHYSICOCHEMICAL PROPERTIES</scope>
    <scope>CHARACTERIZATION OF VARIANTS THR-49; VAL-89; MET-187 AND LEU-234</scope>
</reference>
<reference key="20">
    <citation type="journal article" date="2003" name="J. Clin. Endocrinol. Metab.">
        <title>Micropenis and the 5alpha-reductase-2 (SRD5A2) gene: mutation and V89L polymorphism analysis in 81 Japanese patients.</title>
        <authorList>
            <person name="Sasaki G."/>
            <person name="Ogata T."/>
            <person name="Ishii T."/>
            <person name="Kosaki K."/>
            <person name="Sato S."/>
            <person name="Homma K."/>
            <person name="Takahashi T."/>
            <person name="Hasegawa T."/>
            <person name="Matsuo N."/>
        </authorList>
    </citation>
    <scope>VARIANTS MICROPENIS 26-TYR--PHE-254 DEL; ARG-34 AND GLN-227</scope>
    <scope>VARIANT VAL-89</scope>
</reference>
<reference key="21">
    <citation type="journal article" date="2004" name="Eur. J. Hum. Genet.">
        <title>Comprehensive evaluation of the association between prostate cancer and genotypes/haplotypes in CYP17A1, CYP3A4, and SRD5A2.</title>
        <authorList>
            <person name="Loukola A."/>
            <person name="Chadha M."/>
            <person name="Penn S.G."/>
            <person name="Rank D."/>
            <person name="Conti D.V."/>
            <person name="Thompson D."/>
            <person name="Cicek M."/>
            <person name="Love B."/>
            <person name="Bivolarevic V."/>
            <person name="Yang Q."/>
            <person name="Jiang Y."/>
            <person name="Hanzel D.K."/>
            <person name="Dains K."/>
            <person name="Paris P.L."/>
            <person name="Casey G."/>
            <person name="Witte J.S."/>
        </authorList>
    </citation>
    <scope>VARIANT THR-49</scope>
    <scope>LACK OF ASSOCIATION WITH PROSTATE CANCER</scope>
</reference>
<reference key="22">
    <citation type="journal article" date="2004" name="Horm. Res.">
        <title>Clinical, biochemical and morphologic diagnostic markers in an infant male pseudohermaphrodite patient with compound heterozygous mutations (G115D/R246W) in SRD5A2 gene.</title>
        <authorList>
            <person name="Fernandez-Cancio M."/>
            <person name="Rodo J."/>
            <person name="Andaluz P."/>
            <person name="Martinez de Osaba M.J."/>
            <person name="Rodriguez-Hierro F."/>
            <person name="Esteban C."/>
            <person name="Carrascosa A."/>
            <person name="Audi L."/>
        </authorList>
    </citation>
    <scope>VARIANTS PPSH ASP-115 AND TRP-246</scope>
</reference>
<reference key="23">
    <citation type="journal article" date="2004" name="J. Androl.">
        <title>Compound heterozygous mutations in the SRD5A2 gene exon 4 in a male pseudohermaphrodite patient of Chinese origin.</title>
        <authorList>
            <person name="Fernandez-Cancio M."/>
            <person name="Nistal M."/>
            <person name="Gracia R."/>
            <person name="Molina M.A."/>
            <person name="Tovar J.A."/>
            <person name="Esteban C."/>
            <person name="Carrascosa A."/>
            <person name="Audi L."/>
        </authorList>
    </citation>
    <scope>VARIANT PPSH GLN-227</scope>
</reference>
<reference key="24">
    <citation type="journal article" date="2005" name="Clin. Endocrinol. (Oxf.)">
        <title>SRD5A2 gene analysis in an Italian population of under-masculinized 46,XY subjects.</title>
        <authorList>
            <person name="Nicoletti A."/>
            <person name="Baldazzi L."/>
            <person name="Balsamo A."/>
            <person name="Barp L."/>
            <person name="Pirazzoli P."/>
            <person name="Gennari M."/>
            <person name="Radetti G."/>
            <person name="Cacciari E."/>
            <person name="Cicognani A."/>
        </authorList>
    </citation>
    <scope>VARIANTS PPSH TRP-145; LEU-181; SER-196; PHE-235 AND GLN-246</scope>
    <scope>VARIANTS THR-49 AND VAL-89</scope>
</reference>
<reference key="25">
    <citation type="journal article" date="2005" name="J. Mol. Med.">
        <title>New mutations, hotspots, and founder effects in Brazilian patients with steroid 5alpha-reductase deficiency type 2.</title>
        <authorList>
            <person name="Hackel C."/>
            <person name="Oliveira L.E."/>
            <person name="Ferraz L.F."/>
            <person name="Tonini M.M."/>
            <person name="Silva D.N."/>
            <person name="Toralles M.B."/>
            <person name="Stuchi-Perez E.G."/>
            <person name="Guerra-Junior G."/>
        </authorList>
    </citation>
    <scope>VARIANTS PPSH ARG-126; ARG-158; SER-183; SER-196; ASP-207 AND TRP-246</scope>
    <scope>VARIANTS THR-49 AND VAL-89</scope>
</reference>
<reference key="26">
    <citation type="journal article" date="2005" name="Urology">
        <title>A novel missense mutation of 5-alpha reductase type 2 gene (SRD5A2) leads to severe male pseudohermaphroditism in a Turkish family.</title>
        <authorList>
            <person name="Bahceci M."/>
            <person name="Ersay A.R."/>
            <person name="Tuzcu A."/>
            <person name="Hiort O."/>
            <person name="Richter-Unruh A."/>
            <person name="Gokalp D."/>
        </authorList>
    </citation>
    <scope>VARIANT PPSH ARG-123</scope>
</reference>
<keyword id="KW-0002">3D-structure</keyword>
<keyword id="KW-0221">Differentiation</keyword>
<keyword id="KW-0225">Disease variant</keyword>
<keyword id="KW-0256">Endoplasmic reticulum</keyword>
<keyword id="KW-0443">Lipid metabolism</keyword>
<keyword id="KW-0472">Membrane</keyword>
<keyword id="KW-0492">Microsome</keyword>
<keyword id="KW-0521">NADP</keyword>
<keyword id="KW-0560">Oxidoreductase</keyword>
<keyword id="KW-1267">Proteomics identification</keyword>
<keyword id="KW-0657">Pseudohermaphroditism</keyword>
<keyword id="KW-1185">Reference proteome</keyword>
<keyword id="KW-0726">Sexual differentiation</keyword>
<keyword id="KW-0812">Transmembrane</keyword>
<keyword id="KW-1133">Transmembrane helix</keyword>
<sequence length="254" mass="28407">MQVQCQQSPVLAGSATLVALGALALYVAKPSGYGKHTESLKPAATRLPARAAWFLQELPSFAVPAGILARQPLSLFGPPGTVLLGLFCLHYFHRTFVYSLLNRGRPYPAILILRGTAFCTGNGVLQGYYLIYCAEYPDGWYTDIRFSLGVFLFILGMGINIHSDYILRQLRKPGEISYRIPQGGLFTYVSGANFLGEIIEWIGYALATWSLPALAFAFFSLCFLGLRAFHHHRFYLKMFEDYPKSRKALIPFIF</sequence>
<gene>
    <name type="primary">SRD5A2</name>
</gene>
<protein>
    <recommendedName>
        <fullName>3-oxo-5-alpha-steroid 4-dehydrogenase 2</fullName>
        <ecNumber evidence="4">1.3.1.22</ecNumber>
    </recommendedName>
    <alternativeName>
        <fullName>5 alpha-SR2</fullName>
    </alternativeName>
    <alternativeName>
        <fullName>SR type 2</fullName>
    </alternativeName>
    <alternativeName>
        <fullName>Steroid 5-alpha-reductase 2</fullName>
        <shortName>S5AR 2</shortName>
    </alternativeName>
    <alternativeName>
        <fullName>Type II 5-alpha reductase</fullName>
    </alternativeName>
</protein>